<keyword id="KW-0249">Electron transport</keyword>
<keyword id="KW-0472">Membrane</keyword>
<keyword id="KW-0496">Mitochondrion</keyword>
<keyword id="KW-0999">Mitochondrion inner membrane</keyword>
<keyword id="KW-0520">NAD</keyword>
<keyword id="KW-0679">Respiratory chain</keyword>
<keyword id="KW-1278">Translocase</keyword>
<keyword id="KW-0812">Transmembrane</keyword>
<keyword id="KW-1133">Transmembrane helix</keyword>
<keyword id="KW-0813">Transport</keyword>
<keyword id="KW-0830">Ubiquinone</keyword>
<reference key="1">
    <citation type="journal article" date="2002" name="Proc. Natl. Acad. Sci. U.S.A.">
        <title>Mammalian mitogenomic relationships and the root of the eutherian tree.</title>
        <authorList>
            <person name="Arnason U."/>
            <person name="Adegoke J.A."/>
            <person name="Bodin K."/>
            <person name="Born E.W."/>
            <person name="Esa Y.B."/>
            <person name="Gullberg A."/>
            <person name="Nilsson M."/>
            <person name="Short R.V."/>
            <person name="Xu X."/>
            <person name="Janke A."/>
        </authorList>
    </citation>
    <scope>NUCLEOTIDE SEQUENCE [GENOMIC DNA]</scope>
</reference>
<evidence type="ECO:0000250" key="1">
    <source>
        <dbReference type="UniProtKB" id="P03901"/>
    </source>
</evidence>
<evidence type="ECO:0000250" key="2">
    <source>
        <dbReference type="UniProtKB" id="P03902"/>
    </source>
</evidence>
<evidence type="ECO:0000255" key="3"/>
<evidence type="ECO:0000305" key="4"/>
<gene>
    <name type="primary">MT-ND4L</name>
    <name type="synonym">MTND4L</name>
    <name type="synonym">NADH4L</name>
    <name type="synonym">ND4L</name>
</gene>
<protein>
    <recommendedName>
        <fullName>NADH-ubiquinone oxidoreductase chain 4L</fullName>
        <ecNumber>7.1.1.2</ecNumber>
    </recommendedName>
    <alternativeName>
        <fullName>NADH dehydrogenase subunit 4L</fullName>
    </alternativeName>
</protein>
<accession>Q8LWN4</accession>
<feature type="chain" id="PRO_0000275128" description="NADH-ubiquinone oxidoreductase chain 4L">
    <location>
        <begin position="1"/>
        <end position="98"/>
    </location>
</feature>
<feature type="transmembrane region" description="Helical" evidence="3">
    <location>
        <begin position="1"/>
        <end position="21"/>
    </location>
</feature>
<feature type="transmembrane region" description="Helical" evidence="3">
    <location>
        <begin position="29"/>
        <end position="49"/>
    </location>
</feature>
<feature type="transmembrane region" description="Helical" evidence="3">
    <location>
        <begin position="61"/>
        <end position="81"/>
    </location>
</feature>
<name>NU4LM_TAMTE</name>
<dbReference type="EC" id="7.1.1.2"/>
<dbReference type="EMBL" id="AJ421450">
    <property type="protein sequence ID" value="CAD13416.1"/>
    <property type="molecule type" value="Genomic_DNA"/>
</dbReference>
<dbReference type="RefSeq" id="NP_659384.1">
    <property type="nucleotide sequence ID" value="NC_004032.1"/>
</dbReference>
<dbReference type="SMR" id="Q8LWN4"/>
<dbReference type="GeneID" id="805029"/>
<dbReference type="CTD" id="4539"/>
<dbReference type="GO" id="GO:0005743">
    <property type="term" value="C:mitochondrial inner membrane"/>
    <property type="evidence" value="ECO:0000250"/>
    <property type="project" value="UniProtKB"/>
</dbReference>
<dbReference type="GO" id="GO:0045271">
    <property type="term" value="C:respiratory chain complex I"/>
    <property type="evidence" value="ECO:0000250"/>
    <property type="project" value="UniProtKB"/>
</dbReference>
<dbReference type="GO" id="GO:0008137">
    <property type="term" value="F:NADH dehydrogenase (ubiquinone) activity"/>
    <property type="evidence" value="ECO:0000250"/>
    <property type="project" value="UniProtKB"/>
</dbReference>
<dbReference type="GO" id="GO:0042773">
    <property type="term" value="P:ATP synthesis coupled electron transport"/>
    <property type="evidence" value="ECO:0007669"/>
    <property type="project" value="InterPro"/>
</dbReference>
<dbReference type="FunFam" id="1.10.287.3510:FF:000002">
    <property type="entry name" value="NADH-ubiquinone oxidoreductase chain 4L"/>
    <property type="match status" value="1"/>
</dbReference>
<dbReference type="Gene3D" id="1.10.287.3510">
    <property type="match status" value="1"/>
</dbReference>
<dbReference type="InterPro" id="IPR001133">
    <property type="entry name" value="NADH_UbQ_OxRdtase_chain4L/K"/>
</dbReference>
<dbReference type="InterPro" id="IPR039428">
    <property type="entry name" value="NUOK/Mnh_C1-like"/>
</dbReference>
<dbReference type="PANTHER" id="PTHR11434:SF0">
    <property type="entry name" value="NADH-UBIQUINONE OXIDOREDUCTASE CHAIN 4L"/>
    <property type="match status" value="1"/>
</dbReference>
<dbReference type="PANTHER" id="PTHR11434">
    <property type="entry name" value="NADH-UBIQUINONE OXIDOREDUCTASE SUBUNIT ND4L"/>
    <property type="match status" value="1"/>
</dbReference>
<dbReference type="Pfam" id="PF00420">
    <property type="entry name" value="Oxidored_q2"/>
    <property type="match status" value="1"/>
</dbReference>
<proteinExistence type="inferred from homology"/>
<geneLocation type="mitochondrion"/>
<sequence length="98" mass="10761">MSSIYMNILLAFTMALLGLLMYRSHLMSSLLCLEGMMLSLFILSTVTMLNTSFTLSSMMPVMLMVFAACEAAVGLALLVTVSNTYGLDYVQNLNLLQC</sequence>
<comment type="function">
    <text evidence="1">Core subunit of the mitochondrial membrane respiratory chain NADH dehydrogenase (Complex I) which catalyzes electron transfer from NADH through the respiratory chain, using ubiquinone as an electron acceptor. Part of the enzyme membrane arm which is embedded in the lipid bilayer and involved in proton translocation.</text>
</comment>
<comment type="catalytic activity">
    <reaction evidence="1">
        <text>a ubiquinone + NADH + 5 H(+)(in) = a ubiquinol + NAD(+) + 4 H(+)(out)</text>
        <dbReference type="Rhea" id="RHEA:29091"/>
        <dbReference type="Rhea" id="RHEA-COMP:9565"/>
        <dbReference type="Rhea" id="RHEA-COMP:9566"/>
        <dbReference type="ChEBI" id="CHEBI:15378"/>
        <dbReference type="ChEBI" id="CHEBI:16389"/>
        <dbReference type="ChEBI" id="CHEBI:17976"/>
        <dbReference type="ChEBI" id="CHEBI:57540"/>
        <dbReference type="ChEBI" id="CHEBI:57945"/>
        <dbReference type="EC" id="7.1.1.2"/>
    </reaction>
    <physiologicalReaction direction="left-to-right" evidence="1">
        <dbReference type="Rhea" id="RHEA:29092"/>
    </physiologicalReaction>
</comment>
<comment type="subunit">
    <text evidence="2">Core subunit of respiratory chain NADH dehydrogenase (Complex I) which is composed of 45 different subunits.</text>
</comment>
<comment type="subcellular location">
    <subcellularLocation>
        <location evidence="2">Mitochondrion inner membrane</location>
        <topology evidence="3">Multi-pass membrane protein</topology>
    </subcellularLocation>
</comment>
<comment type="similarity">
    <text evidence="4">Belongs to the complex I subunit 4L family.</text>
</comment>
<organism>
    <name type="scientific">Tamandua tetradactyla</name>
    <name type="common">Southern anteater</name>
    <name type="synonym">Myrmecophaga tetradactyla</name>
    <dbReference type="NCBI Taxonomy" id="48850"/>
    <lineage>
        <taxon>Eukaryota</taxon>
        <taxon>Metazoa</taxon>
        <taxon>Chordata</taxon>
        <taxon>Craniata</taxon>
        <taxon>Vertebrata</taxon>
        <taxon>Euteleostomi</taxon>
        <taxon>Mammalia</taxon>
        <taxon>Eutheria</taxon>
        <taxon>Xenarthra</taxon>
        <taxon>Pilosa</taxon>
        <taxon>Vermilingua</taxon>
        <taxon>Myrmecophagidae</taxon>
        <taxon>Tamandua</taxon>
    </lineage>
</organism>